<gene>
    <name evidence="1" type="primary">dapE</name>
    <name type="ordered locus">BAV1420</name>
</gene>
<keyword id="KW-0028">Amino-acid biosynthesis</keyword>
<keyword id="KW-0170">Cobalt</keyword>
<keyword id="KW-0220">Diaminopimelate biosynthesis</keyword>
<keyword id="KW-0378">Hydrolase</keyword>
<keyword id="KW-0457">Lysine biosynthesis</keyword>
<keyword id="KW-0479">Metal-binding</keyword>
<keyword id="KW-1185">Reference proteome</keyword>
<keyword id="KW-0862">Zinc</keyword>
<accession>Q2L2J6</accession>
<comment type="function">
    <text evidence="1">Catalyzes the hydrolysis of N-succinyl-L,L-diaminopimelic acid (SDAP), forming succinate and LL-2,6-diaminopimelate (DAP), an intermediate involved in the bacterial biosynthesis of lysine and meso-diaminopimelic acid, an essential component of bacterial cell walls.</text>
</comment>
<comment type="catalytic activity">
    <reaction evidence="1">
        <text>N-succinyl-(2S,6S)-2,6-diaminopimelate + H2O = (2S,6S)-2,6-diaminopimelate + succinate</text>
        <dbReference type="Rhea" id="RHEA:22608"/>
        <dbReference type="ChEBI" id="CHEBI:15377"/>
        <dbReference type="ChEBI" id="CHEBI:30031"/>
        <dbReference type="ChEBI" id="CHEBI:57609"/>
        <dbReference type="ChEBI" id="CHEBI:58087"/>
        <dbReference type="EC" id="3.5.1.18"/>
    </reaction>
</comment>
<comment type="cofactor">
    <cofactor evidence="1">
        <name>Zn(2+)</name>
        <dbReference type="ChEBI" id="CHEBI:29105"/>
    </cofactor>
    <cofactor evidence="1">
        <name>Co(2+)</name>
        <dbReference type="ChEBI" id="CHEBI:48828"/>
    </cofactor>
    <text evidence="1">Binds 2 Zn(2+) or Co(2+) ions per subunit.</text>
</comment>
<comment type="pathway">
    <text evidence="1">Amino-acid biosynthesis; L-lysine biosynthesis via DAP pathway; LL-2,6-diaminopimelate from (S)-tetrahydrodipicolinate (succinylase route): step 3/3.</text>
</comment>
<comment type="subunit">
    <text evidence="1">Homodimer.</text>
</comment>
<comment type="similarity">
    <text evidence="1">Belongs to the peptidase M20A family. DapE subfamily.</text>
</comment>
<name>DAPE_BORA1</name>
<feature type="chain" id="PRO_0000375476" description="Succinyl-diaminopimelate desuccinylase">
    <location>
        <begin position="1"/>
        <end position="377"/>
    </location>
</feature>
<feature type="active site" evidence="1">
    <location>
        <position position="68"/>
    </location>
</feature>
<feature type="active site" description="Proton acceptor" evidence="1">
    <location>
        <position position="133"/>
    </location>
</feature>
<feature type="binding site" evidence="1">
    <location>
        <position position="66"/>
    </location>
    <ligand>
        <name>Zn(2+)</name>
        <dbReference type="ChEBI" id="CHEBI:29105"/>
        <label>1</label>
    </ligand>
</feature>
<feature type="binding site" evidence="1">
    <location>
        <position position="99"/>
    </location>
    <ligand>
        <name>Zn(2+)</name>
        <dbReference type="ChEBI" id="CHEBI:29105"/>
        <label>1</label>
    </ligand>
</feature>
<feature type="binding site" evidence="1">
    <location>
        <position position="99"/>
    </location>
    <ligand>
        <name>Zn(2+)</name>
        <dbReference type="ChEBI" id="CHEBI:29105"/>
        <label>2</label>
    </ligand>
</feature>
<feature type="binding site" evidence="1">
    <location>
        <position position="134"/>
    </location>
    <ligand>
        <name>Zn(2+)</name>
        <dbReference type="ChEBI" id="CHEBI:29105"/>
        <label>2</label>
    </ligand>
</feature>
<feature type="binding site" evidence="1">
    <location>
        <position position="162"/>
    </location>
    <ligand>
        <name>Zn(2+)</name>
        <dbReference type="ChEBI" id="CHEBI:29105"/>
        <label>1</label>
    </ligand>
</feature>
<feature type="binding site" evidence="1">
    <location>
        <position position="348"/>
    </location>
    <ligand>
        <name>Zn(2+)</name>
        <dbReference type="ChEBI" id="CHEBI:29105"/>
        <label>2</label>
    </ligand>
</feature>
<proteinExistence type="inferred from homology"/>
<protein>
    <recommendedName>
        <fullName evidence="1">Succinyl-diaminopimelate desuccinylase</fullName>
        <shortName evidence="1">SDAP desuccinylase</shortName>
        <ecNumber evidence="1">3.5.1.18</ecNumber>
    </recommendedName>
    <alternativeName>
        <fullName evidence="1">N-succinyl-LL-2,6-diaminoheptanedioate amidohydrolase</fullName>
    </alternativeName>
</protein>
<organism>
    <name type="scientific">Bordetella avium (strain 197N)</name>
    <dbReference type="NCBI Taxonomy" id="360910"/>
    <lineage>
        <taxon>Bacteria</taxon>
        <taxon>Pseudomonadati</taxon>
        <taxon>Pseudomonadota</taxon>
        <taxon>Betaproteobacteria</taxon>
        <taxon>Burkholderiales</taxon>
        <taxon>Alcaligenaceae</taxon>
        <taxon>Bordetella</taxon>
    </lineage>
</organism>
<dbReference type="EC" id="3.5.1.18" evidence="1"/>
<dbReference type="EMBL" id="AM167904">
    <property type="protein sequence ID" value="CAJ49029.1"/>
    <property type="molecule type" value="Genomic_DNA"/>
</dbReference>
<dbReference type="RefSeq" id="WP_012417101.1">
    <property type="nucleotide sequence ID" value="NC_010645.1"/>
</dbReference>
<dbReference type="SMR" id="Q2L2J6"/>
<dbReference type="STRING" id="360910.BAV1420"/>
<dbReference type="GeneID" id="92935455"/>
<dbReference type="KEGG" id="bav:BAV1420"/>
<dbReference type="eggNOG" id="COG0624">
    <property type="taxonomic scope" value="Bacteria"/>
</dbReference>
<dbReference type="HOGENOM" id="CLU_021802_4_0_4"/>
<dbReference type="OrthoDB" id="9809784at2"/>
<dbReference type="UniPathway" id="UPA00034">
    <property type="reaction ID" value="UER00021"/>
</dbReference>
<dbReference type="Proteomes" id="UP000001977">
    <property type="component" value="Chromosome"/>
</dbReference>
<dbReference type="GO" id="GO:0008777">
    <property type="term" value="F:acetylornithine deacetylase activity"/>
    <property type="evidence" value="ECO:0007669"/>
    <property type="project" value="TreeGrafter"/>
</dbReference>
<dbReference type="GO" id="GO:0050897">
    <property type="term" value="F:cobalt ion binding"/>
    <property type="evidence" value="ECO:0007669"/>
    <property type="project" value="UniProtKB-UniRule"/>
</dbReference>
<dbReference type="GO" id="GO:0009014">
    <property type="term" value="F:succinyl-diaminopimelate desuccinylase activity"/>
    <property type="evidence" value="ECO:0007669"/>
    <property type="project" value="UniProtKB-UniRule"/>
</dbReference>
<dbReference type="GO" id="GO:0008270">
    <property type="term" value="F:zinc ion binding"/>
    <property type="evidence" value="ECO:0007669"/>
    <property type="project" value="UniProtKB-UniRule"/>
</dbReference>
<dbReference type="GO" id="GO:0019877">
    <property type="term" value="P:diaminopimelate biosynthetic process"/>
    <property type="evidence" value="ECO:0007669"/>
    <property type="project" value="UniProtKB-UniRule"/>
</dbReference>
<dbReference type="GO" id="GO:0006526">
    <property type="term" value="P:L-arginine biosynthetic process"/>
    <property type="evidence" value="ECO:0007669"/>
    <property type="project" value="TreeGrafter"/>
</dbReference>
<dbReference type="GO" id="GO:0009089">
    <property type="term" value="P:lysine biosynthetic process via diaminopimelate"/>
    <property type="evidence" value="ECO:0007669"/>
    <property type="project" value="UniProtKB-UniRule"/>
</dbReference>
<dbReference type="CDD" id="cd03891">
    <property type="entry name" value="M20_DapE_proteobac"/>
    <property type="match status" value="1"/>
</dbReference>
<dbReference type="FunFam" id="3.30.70.360:FF:000011">
    <property type="entry name" value="Succinyl-diaminopimelate desuccinylase"/>
    <property type="match status" value="1"/>
</dbReference>
<dbReference type="FunFam" id="3.40.630.10:FF:000005">
    <property type="entry name" value="Succinyl-diaminopimelate desuccinylase"/>
    <property type="match status" value="1"/>
</dbReference>
<dbReference type="Gene3D" id="1.10.150.900">
    <property type="match status" value="1"/>
</dbReference>
<dbReference type="Gene3D" id="3.30.70.360">
    <property type="match status" value="1"/>
</dbReference>
<dbReference type="Gene3D" id="3.40.630.10">
    <property type="entry name" value="Zn peptidases"/>
    <property type="match status" value="1"/>
</dbReference>
<dbReference type="HAMAP" id="MF_01690">
    <property type="entry name" value="DapE"/>
    <property type="match status" value="1"/>
</dbReference>
<dbReference type="InterPro" id="IPR036264">
    <property type="entry name" value="Bact_exopeptidase_dim_dom"/>
</dbReference>
<dbReference type="InterPro" id="IPR005941">
    <property type="entry name" value="DapE_proteobac"/>
</dbReference>
<dbReference type="InterPro" id="IPR002933">
    <property type="entry name" value="Peptidase_M20"/>
</dbReference>
<dbReference type="InterPro" id="IPR011650">
    <property type="entry name" value="Peptidase_M20_dimer"/>
</dbReference>
<dbReference type="InterPro" id="IPR050072">
    <property type="entry name" value="Peptidase_M20A"/>
</dbReference>
<dbReference type="NCBIfam" id="TIGR01246">
    <property type="entry name" value="dapE_proteo"/>
    <property type="match status" value="1"/>
</dbReference>
<dbReference type="NCBIfam" id="NF009557">
    <property type="entry name" value="PRK13009.1"/>
    <property type="match status" value="1"/>
</dbReference>
<dbReference type="PANTHER" id="PTHR43808">
    <property type="entry name" value="ACETYLORNITHINE DEACETYLASE"/>
    <property type="match status" value="1"/>
</dbReference>
<dbReference type="PANTHER" id="PTHR43808:SF31">
    <property type="entry name" value="N-ACETYL-L-CITRULLINE DEACETYLASE"/>
    <property type="match status" value="1"/>
</dbReference>
<dbReference type="Pfam" id="PF07687">
    <property type="entry name" value="M20_dimer"/>
    <property type="match status" value="1"/>
</dbReference>
<dbReference type="Pfam" id="PF01546">
    <property type="entry name" value="Peptidase_M20"/>
    <property type="match status" value="1"/>
</dbReference>
<dbReference type="SUPFAM" id="SSF55031">
    <property type="entry name" value="Bacterial exopeptidase dimerisation domain"/>
    <property type="match status" value="1"/>
</dbReference>
<dbReference type="SUPFAM" id="SSF53187">
    <property type="entry name" value="Zn-dependent exopeptidases"/>
    <property type="match status" value="1"/>
</dbReference>
<dbReference type="PROSITE" id="PS00759">
    <property type="entry name" value="ARGE_DAPE_CPG2_2"/>
    <property type="match status" value="1"/>
</dbReference>
<evidence type="ECO:0000255" key="1">
    <source>
        <dbReference type="HAMAP-Rule" id="MF_01690"/>
    </source>
</evidence>
<sequence length="377" mass="40753">MSAVLDLVRDLIARPSVTPQDKDCQQMLAQRLARIGFQCETIARGGVTNLWARRGTQGPLVVFAGHTDVVPPGPREKWDSDPFVPTERDGYLYGRGASDMKSSIAAFVVAVEEFVAAHPQHEGSLAFLLTSDEEGPAIDGTVIVCDALQARGEKLDYCIVGEPTSTHELGDVCKNGRRGSLGGTLTVKGIQGHVAYPHLARNPVHQFAPALAELVGIEWDKGNEYFPPTTFQISNLNSGTGATNVVPAEAIVEFNCRFSTASTPESLKARVHEVLDRHGLEYDLEWDLGGEPFLTARGSLTDALSSAIQAETGLTPELSTTGGTSDGRFIAKICPQVIEFGPTNATIHKINERVALDCLDPLKNIYRRTLENLLLAH</sequence>
<reference key="1">
    <citation type="journal article" date="2006" name="J. Bacteriol.">
        <title>Comparison of the genome sequence of the poultry pathogen Bordetella avium with those of B. bronchiseptica, B. pertussis, and B. parapertussis reveals extensive diversity in surface structures associated with host interaction.</title>
        <authorList>
            <person name="Sebaihia M."/>
            <person name="Preston A."/>
            <person name="Maskell D.J."/>
            <person name="Kuzmiak H."/>
            <person name="Connell T.D."/>
            <person name="King N.D."/>
            <person name="Orndorff P.E."/>
            <person name="Miyamoto D.M."/>
            <person name="Thomson N.R."/>
            <person name="Harris D."/>
            <person name="Goble A."/>
            <person name="Lord A."/>
            <person name="Murphy L."/>
            <person name="Quail M.A."/>
            <person name="Rutter S."/>
            <person name="Squares R."/>
            <person name="Squares S."/>
            <person name="Woodward J."/>
            <person name="Parkhill J."/>
            <person name="Temple L.M."/>
        </authorList>
    </citation>
    <scope>NUCLEOTIDE SEQUENCE [LARGE SCALE GENOMIC DNA]</scope>
    <source>
        <strain>197N</strain>
    </source>
</reference>